<feature type="peptide" id="PRO_0000044334" description="Pyrokinin-4">
    <location>
        <begin position="1"/>
        <end position="12"/>
    </location>
</feature>
<feature type="modified residue" description="Leucine amide" evidence="3">
    <location>
        <position position="12"/>
    </location>
</feature>
<keyword id="KW-0027">Amidation</keyword>
<keyword id="KW-0903">Direct protein sequencing</keyword>
<keyword id="KW-0527">Neuropeptide</keyword>
<keyword id="KW-0964">Secreted</keyword>
<evidence type="ECO:0000250" key="1">
    <source>
        <dbReference type="UniProtKB" id="P82690"/>
    </source>
</evidence>
<evidence type="ECO:0000255" key="2"/>
<evidence type="ECO:0000269" key="3">
    <source>
    </source>
</evidence>
<evidence type="ECO:0000269" key="4">
    <source ref="2"/>
</evidence>
<evidence type="ECO:0000305" key="5"/>
<organism>
    <name type="scientific">Periplaneta brunnea</name>
    <name type="common">Brown cockroach</name>
    <dbReference type="NCBI Taxonomy" id="36976"/>
    <lineage>
        <taxon>Eukaryota</taxon>
        <taxon>Metazoa</taxon>
        <taxon>Ecdysozoa</taxon>
        <taxon>Arthropoda</taxon>
        <taxon>Hexapoda</taxon>
        <taxon>Insecta</taxon>
        <taxon>Pterygota</taxon>
        <taxon>Neoptera</taxon>
        <taxon>Polyneoptera</taxon>
        <taxon>Dictyoptera</taxon>
        <taxon>Blattodea</taxon>
        <taxon>Blattoidea</taxon>
        <taxon>Blattidae</taxon>
        <taxon>Blattinae</taxon>
        <taxon>Periplaneta</taxon>
    </lineage>
</organism>
<dbReference type="GO" id="GO:0005576">
    <property type="term" value="C:extracellular region"/>
    <property type="evidence" value="ECO:0007669"/>
    <property type="project" value="UniProtKB-SubCell"/>
</dbReference>
<dbReference type="GO" id="GO:0007218">
    <property type="term" value="P:neuropeptide signaling pathway"/>
    <property type="evidence" value="ECO:0007669"/>
    <property type="project" value="UniProtKB-KW"/>
</dbReference>
<reference evidence="5" key="1">
    <citation type="journal article" date="2005" name="Peptides">
        <title>Peptidomics of neurohemal organs from species of the cockroach family Blattidae: how do neuropeptides of closely related species differ?</title>
        <authorList>
            <person name="Predel R."/>
            <person name="Gaede G."/>
        </authorList>
    </citation>
    <scope>PROTEIN SEQUENCE</scope>
    <scope>MASS SPECTROMETRY</scope>
    <scope>AMIDATION AT LEU-12</scope>
    <source>
        <tissue evidence="3">Corpora allata</tissue>
    </source>
</reference>
<reference evidence="5" key="2">
    <citation type="submission" date="2004-11" db="UniProtKB">
        <authorList>
            <person name="Predel R."/>
            <person name="Gaede G."/>
        </authorList>
    </citation>
    <scope>SUBCELLULAR LOCATION</scope>
    <scope>TISSUE SPECIFICITY</scope>
</reference>
<proteinExistence type="evidence at protein level"/>
<comment type="function">
    <text evidence="1">Mediates visceral muscle contractile activity (myotropic activity).</text>
</comment>
<comment type="subcellular location">
    <subcellularLocation>
        <location evidence="4">Secreted</location>
    </subcellularLocation>
</comment>
<comment type="tissue specificity">
    <text evidence="4">Expressed in the brain, subesophageal ganglion and in the retrocerebral complex (mainly corpora allata).</text>
</comment>
<comment type="mass spectrometry"/>
<comment type="similarity">
    <text evidence="2">Belongs to the pyrokinin family.</text>
</comment>
<protein>
    <recommendedName>
        <fullName>Pyrokinin-4</fullName>
        <shortName>Peb-PK-4</shortName>
    </recommendedName>
    <alternativeName>
        <fullName>YXPRL-amide</fullName>
    </alternativeName>
</protein>
<name>PPK4_PERBR</name>
<accession>P84358</accession>
<sequence>DHLSHDVYSPRL</sequence>